<protein>
    <recommendedName>
        <fullName>Dihydromonapterin reductase</fullName>
        <shortName>H(2)-MPt reductase</shortName>
        <ecNumber evidence="1">1.5.1.50</ecNumber>
    </recommendedName>
    <alternativeName>
        <fullName>Dihydrofolate reductase</fullName>
        <shortName>DHFR</shortName>
        <ecNumber evidence="1">1.5.1.3</ecNumber>
    </alternativeName>
</protein>
<evidence type="ECO:0000250" key="1">
    <source>
        <dbReference type="UniProtKB" id="P0AFS3"/>
    </source>
</evidence>
<evidence type="ECO:0000255" key="2">
    <source>
        <dbReference type="PROSITE-ProRule" id="PRU10001"/>
    </source>
</evidence>
<evidence type="ECO:0000305" key="3"/>
<gene>
    <name type="primary">folM</name>
    <name type="ordered locus">EcE24377A_1815</name>
</gene>
<keyword id="KW-0521">NADP</keyword>
<keyword id="KW-0554">One-carbon metabolism</keyword>
<keyword id="KW-0560">Oxidoreductase</keyword>
<keyword id="KW-1185">Reference proteome</keyword>
<proteinExistence type="inferred from homology"/>
<feature type="chain" id="PRO_0000339393" description="Dihydromonapterin reductase">
    <location>
        <begin position="1"/>
        <end position="240"/>
    </location>
</feature>
<feature type="active site" description="Proton acceptor" evidence="2">
    <location>
        <position position="152"/>
    </location>
</feature>
<sequence length="240" mass="26334">MGNTQPLPILITGGGRRIGLALAWHFINQKQPVIVSYRTHYPAIDGLINAGAQCIQADFSTNDGVMAFADEVLKSTHGLRAILHNASAWMAEKPGAPLADVLACMMQIHVNTPYLLNHALERLLRGHGHAASDIIHFTDYVVERGSDKHIAYAASKAALDNMTRSFARKLAPEVKVNSIAPSLILFNEHDDAEYRQQALNKSLMKTAPGEKEVIDLVDYLLTSCFVTGRSFPLDGGRHLR</sequence>
<dbReference type="EC" id="1.5.1.50" evidence="1"/>
<dbReference type="EC" id="1.5.1.3" evidence="1"/>
<dbReference type="EMBL" id="CP000800">
    <property type="protein sequence ID" value="ABV16659.1"/>
    <property type="molecule type" value="Genomic_DNA"/>
</dbReference>
<dbReference type="RefSeq" id="WP_000528571.1">
    <property type="nucleotide sequence ID" value="NC_009801.1"/>
</dbReference>
<dbReference type="SMR" id="A7ZM66"/>
<dbReference type="KEGG" id="ecw:EcE24377A_1815"/>
<dbReference type="HOGENOM" id="CLU_010194_1_3_6"/>
<dbReference type="Proteomes" id="UP000001122">
    <property type="component" value="Chromosome"/>
</dbReference>
<dbReference type="GO" id="GO:0004146">
    <property type="term" value="F:dihydrofolate reductase activity"/>
    <property type="evidence" value="ECO:0007669"/>
    <property type="project" value="UniProtKB-EC"/>
</dbReference>
<dbReference type="GO" id="GO:0006730">
    <property type="term" value="P:one-carbon metabolic process"/>
    <property type="evidence" value="ECO:0007669"/>
    <property type="project" value="UniProtKB-KW"/>
</dbReference>
<dbReference type="CDD" id="cd05357">
    <property type="entry name" value="PR_SDR_c"/>
    <property type="match status" value="1"/>
</dbReference>
<dbReference type="FunFam" id="3.40.50.720:FF:000225">
    <property type="entry name" value="Dihydrofolate reductase FolM"/>
    <property type="match status" value="1"/>
</dbReference>
<dbReference type="Gene3D" id="3.40.50.720">
    <property type="entry name" value="NAD(P)-binding Rossmann-like Domain"/>
    <property type="match status" value="1"/>
</dbReference>
<dbReference type="InterPro" id="IPR036291">
    <property type="entry name" value="NAD(P)-bd_dom_sf"/>
</dbReference>
<dbReference type="InterPro" id="IPR020904">
    <property type="entry name" value="Sc_DH/Rdtase_CS"/>
</dbReference>
<dbReference type="InterPro" id="IPR002347">
    <property type="entry name" value="SDR_fam"/>
</dbReference>
<dbReference type="NCBIfam" id="NF005066">
    <property type="entry name" value="PRK06483.1"/>
    <property type="match status" value="1"/>
</dbReference>
<dbReference type="PANTHER" id="PTHR43639:SF6">
    <property type="entry name" value="DIHYDROMONAPTERIN REDUCTASE"/>
    <property type="match status" value="1"/>
</dbReference>
<dbReference type="PANTHER" id="PTHR43639">
    <property type="entry name" value="OXIDOREDUCTASE, SHORT-CHAIN DEHYDROGENASE/REDUCTASE FAMILY (AFU_ORTHOLOGUE AFUA_5G02870)"/>
    <property type="match status" value="1"/>
</dbReference>
<dbReference type="Pfam" id="PF13561">
    <property type="entry name" value="adh_short_C2"/>
    <property type="match status" value="1"/>
</dbReference>
<dbReference type="PRINTS" id="PR00081">
    <property type="entry name" value="GDHRDH"/>
</dbReference>
<dbReference type="SUPFAM" id="SSF51735">
    <property type="entry name" value="NAD(P)-binding Rossmann-fold domains"/>
    <property type="match status" value="1"/>
</dbReference>
<dbReference type="PROSITE" id="PS00061">
    <property type="entry name" value="ADH_SHORT"/>
    <property type="match status" value="1"/>
</dbReference>
<reference key="1">
    <citation type="journal article" date="2008" name="J. Bacteriol.">
        <title>The pangenome structure of Escherichia coli: comparative genomic analysis of E. coli commensal and pathogenic isolates.</title>
        <authorList>
            <person name="Rasko D.A."/>
            <person name="Rosovitz M.J."/>
            <person name="Myers G.S.A."/>
            <person name="Mongodin E.F."/>
            <person name="Fricke W.F."/>
            <person name="Gajer P."/>
            <person name="Crabtree J."/>
            <person name="Sebaihia M."/>
            <person name="Thomson N.R."/>
            <person name="Chaudhuri R."/>
            <person name="Henderson I.R."/>
            <person name="Sperandio V."/>
            <person name="Ravel J."/>
        </authorList>
    </citation>
    <scope>NUCLEOTIDE SEQUENCE [LARGE SCALE GENOMIC DNA]</scope>
    <source>
        <strain>E24377A / ETEC</strain>
    </source>
</reference>
<organism>
    <name type="scientific">Escherichia coli O139:H28 (strain E24377A / ETEC)</name>
    <dbReference type="NCBI Taxonomy" id="331111"/>
    <lineage>
        <taxon>Bacteria</taxon>
        <taxon>Pseudomonadati</taxon>
        <taxon>Pseudomonadota</taxon>
        <taxon>Gammaproteobacteria</taxon>
        <taxon>Enterobacterales</taxon>
        <taxon>Enterobacteriaceae</taxon>
        <taxon>Escherichia</taxon>
    </lineage>
</organism>
<name>FOLM_ECO24</name>
<comment type="function">
    <text evidence="1">Catalyzes the reduction of dihydromonapterin to tetrahydromonapterin. Also has lower activity with dihydrofolate.</text>
</comment>
<comment type="catalytic activity">
    <reaction evidence="1">
        <text>(6S)-5,6,7,8-tetrahydrofolate + NADP(+) = 7,8-dihydrofolate + NADPH + H(+)</text>
        <dbReference type="Rhea" id="RHEA:15009"/>
        <dbReference type="ChEBI" id="CHEBI:15378"/>
        <dbReference type="ChEBI" id="CHEBI:57451"/>
        <dbReference type="ChEBI" id="CHEBI:57453"/>
        <dbReference type="ChEBI" id="CHEBI:57783"/>
        <dbReference type="ChEBI" id="CHEBI:58349"/>
        <dbReference type="EC" id="1.5.1.3"/>
    </reaction>
</comment>
<comment type="catalytic activity">
    <reaction evidence="1">
        <text>7,8-dihydromonapterin + NADPH + H(+) = 5,6,7,8-tetrahydromonapterin + NADP(+)</text>
        <dbReference type="Rhea" id="RHEA:34847"/>
        <dbReference type="ChEBI" id="CHEBI:15378"/>
        <dbReference type="ChEBI" id="CHEBI:57783"/>
        <dbReference type="ChEBI" id="CHEBI:58349"/>
        <dbReference type="ChEBI" id="CHEBI:71175"/>
        <dbReference type="ChEBI" id="CHEBI:71177"/>
        <dbReference type="EC" id="1.5.1.50"/>
    </reaction>
</comment>
<comment type="similarity">
    <text evidence="3">Belongs to the short-chain dehydrogenases/reductases (SDR) family. FolM subfamily.</text>
</comment>
<accession>A7ZM66</accession>